<dbReference type="EMBL" id="CP000494">
    <property type="protein sequence ID" value="ABQ37068.1"/>
    <property type="molecule type" value="Genomic_DNA"/>
</dbReference>
<dbReference type="RefSeq" id="WP_012045042.1">
    <property type="nucleotide sequence ID" value="NC_009485.1"/>
</dbReference>
<dbReference type="SMR" id="A5ELM4"/>
<dbReference type="STRING" id="288000.BBta_5067"/>
<dbReference type="KEGG" id="bbt:BBta_5067"/>
<dbReference type="eggNOG" id="COG0090">
    <property type="taxonomic scope" value="Bacteria"/>
</dbReference>
<dbReference type="HOGENOM" id="CLU_036235_2_1_5"/>
<dbReference type="OrthoDB" id="9778722at2"/>
<dbReference type="Proteomes" id="UP000000246">
    <property type="component" value="Chromosome"/>
</dbReference>
<dbReference type="GO" id="GO:0015934">
    <property type="term" value="C:large ribosomal subunit"/>
    <property type="evidence" value="ECO:0007669"/>
    <property type="project" value="InterPro"/>
</dbReference>
<dbReference type="GO" id="GO:0019843">
    <property type="term" value="F:rRNA binding"/>
    <property type="evidence" value="ECO:0007669"/>
    <property type="project" value="UniProtKB-UniRule"/>
</dbReference>
<dbReference type="GO" id="GO:0003735">
    <property type="term" value="F:structural constituent of ribosome"/>
    <property type="evidence" value="ECO:0007669"/>
    <property type="project" value="InterPro"/>
</dbReference>
<dbReference type="GO" id="GO:0016740">
    <property type="term" value="F:transferase activity"/>
    <property type="evidence" value="ECO:0007669"/>
    <property type="project" value="InterPro"/>
</dbReference>
<dbReference type="GO" id="GO:0002181">
    <property type="term" value="P:cytoplasmic translation"/>
    <property type="evidence" value="ECO:0007669"/>
    <property type="project" value="TreeGrafter"/>
</dbReference>
<dbReference type="FunFam" id="2.30.30.30:FF:000055">
    <property type="entry name" value="50S ribosomal protein L2"/>
    <property type="match status" value="1"/>
</dbReference>
<dbReference type="FunFam" id="2.40.50.140:FF:000003">
    <property type="entry name" value="50S ribosomal protein L2"/>
    <property type="match status" value="1"/>
</dbReference>
<dbReference type="FunFam" id="4.10.950.10:FF:000001">
    <property type="entry name" value="50S ribosomal protein L2"/>
    <property type="match status" value="1"/>
</dbReference>
<dbReference type="Gene3D" id="2.30.30.30">
    <property type="match status" value="1"/>
</dbReference>
<dbReference type="Gene3D" id="2.40.50.140">
    <property type="entry name" value="Nucleic acid-binding proteins"/>
    <property type="match status" value="1"/>
</dbReference>
<dbReference type="Gene3D" id="4.10.950.10">
    <property type="entry name" value="Ribosomal protein L2, domain 3"/>
    <property type="match status" value="1"/>
</dbReference>
<dbReference type="HAMAP" id="MF_01320_B">
    <property type="entry name" value="Ribosomal_uL2_B"/>
    <property type="match status" value="1"/>
</dbReference>
<dbReference type="InterPro" id="IPR012340">
    <property type="entry name" value="NA-bd_OB-fold"/>
</dbReference>
<dbReference type="InterPro" id="IPR014722">
    <property type="entry name" value="Rib_uL2_dom2"/>
</dbReference>
<dbReference type="InterPro" id="IPR002171">
    <property type="entry name" value="Ribosomal_uL2"/>
</dbReference>
<dbReference type="InterPro" id="IPR005880">
    <property type="entry name" value="Ribosomal_uL2_bac/org-type"/>
</dbReference>
<dbReference type="InterPro" id="IPR022669">
    <property type="entry name" value="Ribosomal_uL2_C"/>
</dbReference>
<dbReference type="InterPro" id="IPR022671">
    <property type="entry name" value="Ribosomal_uL2_CS"/>
</dbReference>
<dbReference type="InterPro" id="IPR014726">
    <property type="entry name" value="Ribosomal_uL2_dom3"/>
</dbReference>
<dbReference type="InterPro" id="IPR022666">
    <property type="entry name" value="Ribosomal_uL2_RNA-bd_dom"/>
</dbReference>
<dbReference type="InterPro" id="IPR008991">
    <property type="entry name" value="Translation_prot_SH3-like_sf"/>
</dbReference>
<dbReference type="NCBIfam" id="TIGR01171">
    <property type="entry name" value="rplB_bact"/>
    <property type="match status" value="1"/>
</dbReference>
<dbReference type="PANTHER" id="PTHR13691:SF5">
    <property type="entry name" value="LARGE RIBOSOMAL SUBUNIT PROTEIN UL2M"/>
    <property type="match status" value="1"/>
</dbReference>
<dbReference type="PANTHER" id="PTHR13691">
    <property type="entry name" value="RIBOSOMAL PROTEIN L2"/>
    <property type="match status" value="1"/>
</dbReference>
<dbReference type="Pfam" id="PF00181">
    <property type="entry name" value="Ribosomal_L2"/>
    <property type="match status" value="1"/>
</dbReference>
<dbReference type="Pfam" id="PF03947">
    <property type="entry name" value="Ribosomal_L2_C"/>
    <property type="match status" value="1"/>
</dbReference>
<dbReference type="PIRSF" id="PIRSF002158">
    <property type="entry name" value="Ribosomal_L2"/>
    <property type="match status" value="1"/>
</dbReference>
<dbReference type="SMART" id="SM01383">
    <property type="entry name" value="Ribosomal_L2"/>
    <property type="match status" value="1"/>
</dbReference>
<dbReference type="SMART" id="SM01382">
    <property type="entry name" value="Ribosomal_L2_C"/>
    <property type="match status" value="1"/>
</dbReference>
<dbReference type="SUPFAM" id="SSF50249">
    <property type="entry name" value="Nucleic acid-binding proteins"/>
    <property type="match status" value="1"/>
</dbReference>
<dbReference type="SUPFAM" id="SSF50104">
    <property type="entry name" value="Translation proteins SH3-like domain"/>
    <property type="match status" value="1"/>
</dbReference>
<dbReference type="PROSITE" id="PS00467">
    <property type="entry name" value="RIBOSOMAL_L2"/>
    <property type="match status" value="1"/>
</dbReference>
<keyword id="KW-1185">Reference proteome</keyword>
<keyword id="KW-0687">Ribonucleoprotein</keyword>
<keyword id="KW-0689">Ribosomal protein</keyword>
<keyword id="KW-0694">RNA-binding</keyword>
<keyword id="KW-0699">rRNA-binding</keyword>
<accession>A5ELM4</accession>
<protein>
    <recommendedName>
        <fullName evidence="1">Large ribosomal subunit protein uL2</fullName>
    </recommendedName>
    <alternativeName>
        <fullName evidence="3">50S ribosomal protein L2</fullName>
    </alternativeName>
</protein>
<sequence length="277" mass="30376">MALKTFNPTTPGQRQLVMVDRSALYKGKPVKALTEGKLSSGGRNNTGRITVRFLGGGHKQSYRMVDFKRDKVDVPATVERLEYDPNRTAFIALVKYQDGELAYILAPQRLAVGDTIVAGNYVDVKPGNVMPLGNMPVGTIVHNIEVKIGKGGQLARSAGTYAQIVGRDQDYVIVRLNSGEQRLVHGRCRGTIGAVSNPDHMNTSIGKAGRKRWMGRRPHNRGVAMNPIDHPHGGGEGRTSGGRHPVTPWGKPTKGKKTRTNKSTDKFILLSRHKRKK</sequence>
<name>RL2_BRASB</name>
<organism>
    <name type="scientific">Bradyrhizobium sp. (strain BTAi1 / ATCC BAA-1182)</name>
    <dbReference type="NCBI Taxonomy" id="288000"/>
    <lineage>
        <taxon>Bacteria</taxon>
        <taxon>Pseudomonadati</taxon>
        <taxon>Pseudomonadota</taxon>
        <taxon>Alphaproteobacteria</taxon>
        <taxon>Hyphomicrobiales</taxon>
        <taxon>Nitrobacteraceae</taxon>
        <taxon>Bradyrhizobium</taxon>
    </lineage>
</organism>
<gene>
    <name evidence="1" type="primary">rplB</name>
    <name type="ordered locus">BBta_5067</name>
</gene>
<comment type="function">
    <text evidence="1">One of the primary rRNA binding proteins. Required for association of the 30S and 50S subunits to form the 70S ribosome, for tRNA binding and peptide bond formation. It has been suggested to have peptidyltransferase activity; this is somewhat controversial. Makes several contacts with the 16S rRNA in the 70S ribosome.</text>
</comment>
<comment type="subunit">
    <text evidence="1">Part of the 50S ribosomal subunit. Forms a bridge to the 30S subunit in the 70S ribosome.</text>
</comment>
<comment type="similarity">
    <text evidence="1">Belongs to the universal ribosomal protein uL2 family.</text>
</comment>
<evidence type="ECO:0000255" key="1">
    <source>
        <dbReference type="HAMAP-Rule" id="MF_01320"/>
    </source>
</evidence>
<evidence type="ECO:0000256" key="2">
    <source>
        <dbReference type="SAM" id="MobiDB-lite"/>
    </source>
</evidence>
<evidence type="ECO:0000305" key="3"/>
<feature type="chain" id="PRO_0000309876" description="Large ribosomal subunit protein uL2">
    <location>
        <begin position="1"/>
        <end position="277"/>
    </location>
</feature>
<feature type="region of interest" description="Disordered" evidence="2">
    <location>
        <begin position="222"/>
        <end position="265"/>
    </location>
</feature>
<reference key="1">
    <citation type="journal article" date="2007" name="Science">
        <title>Legumes symbioses: absence of nod genes in photosynthetic bradyrhizobia.</title>
        <authorList>
            <person name="Giraud E."/>
            <person name="Moulin L."/>
            <person name="Vallenet D."/>
            <person name="Barbe V."/>
            <person name="Cytryn E."/>
            <person name="Avarre J.-C."/>
            <person name="Jaubert M."/>
            <person name="Simon D."/>
            <person name="Cartieaux F."/>
            <person name="Prin Y."/>
            <person name="Bena G."/>
            <person name="Hannibal L."/>
            <person name="Fardoux J."/>
            <person name="Kojadinovic M."/>
            <person name="Vuillet L."/>
            <person name="Lajus A."/>
            <person name="Cruveiller S."/>
            <person name="Rouy Z."/>
            <person name="Mangenot S."/>
            <person name="Segurens B."/>
            <person name="Dossat C."/>
            <person name="Franck W.L."/>
            <person name="Chang W.-S."/>
            <person name="Saunders E."/>
            <person name="Bruce D."/>
            <person name="Richardson P."/>
            <person name="Normand P."/>
            <person name="Dreyfus B."/>
            <person name="Pignol D."/>
            <person name="Stacey G."/>
            <person name="Emerich D."/>
            <person name="Vermeglio A."/>
            <person name="Medigue C."/>
            <person name="Sadowsky M."/>
        </authorList>
    </citation>
    <scope>NUCLEOTIDE SEQUENCE [LARGE SCALE GENOMIC DNA]</scope>
    <source>
        <strain>BTAi1 / ATCC BAA-1182</strain>
    </source>
</reference>
<proteinExistence type="inferred from homology"/>